<evidence type="ECO:0000255" key="1">
    <source>
        <dbReference type="HAMAP-Rule" id="MF_00741"/>
    </source>
</evidence>
<feature type="chain" id="PRO_1000148274" description="Phosphoribosylformylglycinamidine cyclo-ligase">
    <location>
        <begin position="1"/>
        <end position="331"/>
    </location>
</feature>
<comment type="catalytic activity">
    <reaction evidence="1">
        <text>2-formamido-N(1)-(5-O-phospho-beta-D-ribosyl)acetamidine + ATP = 5-amino-1-(5-phospho-beta-D-ribosyl)imidazole + ADP + phosphate + H(+)</text>
        <dbReference type="Rhea" id="RHEA:23032"/>
        <dbReference type="ChEBI" id="CHEBI:15378"/>
        <dbReference type="ChEBI" id="CHEBI:30616"/>
        <dbReference type="ChEBI" id="CHEBI:43474"/>
        <dbReference type="ChEBI" id="CHEBI:137981"/>
        <dbReference type="ChEBI" id="CHEBI:147287"/>
        <dbReference type="ChEBI" id="CHEBI:456216"/>
        <dbReference type="EC" id="6.3.3.1"/>
    </reaction>
</comment>
<comment type="pathway">
    <text evidence="1">Purine metabolism; IMP biosynthesis via de novo pathway; 5-amino-1-(5-phospho-D-ribosyl)imidazole from N(2)-formyl-N(1)-(5-phospho-D-ribosyl)glycinamide: step 2/2.</text>
</comment>
<comment type="subcellular location">
    <subcellularLocation>
        <location evidence="1">Cytoplasm</location>
    </subcellularLocation>
</comment>
<comment type="similarity">
    <text evidence="1">Belongs to the AIR synthase family.</text>
</comment>
<proteinExistence type="inferred from homology"/>
<keyword id="KW-0067">ATP-binding</keyword>
<keyword id="KW-0963">Cytoplasm</keyword>
<keyword id="KW-0436">Ligase</keyword>
<keyword id="KW-0547">Nucleotide-binding</keyword>
<keyword id="KW-0658">Purine biosynthesis</keyword>
<reference key="1">
    <citation type="submission" date="2005-09" db="EMBL/GenBank/DDBJ databases">
        <title>Complete genome sequence of Clostridium kluyveri and comparative genomics of Clostridia species.</title>
        <authorList>
            <person name="Inui M."/>
            <person name="Nonaka H."/>
            <person name="Shinoda Y."/>
            <person name="Ikenaga Y."/>
            <person name="Abe M."/>
            <person name="Naito K."/>
            <person name="Vertes A.A."/>
            <person name="Yukawa H."/>
        </authorList>
    </citation>
    <scope>NUCLEOTIDE SEQUENCE [LARGE SCALE GENOMIC DNA]</scope>
    <source>
        <strain>NBRC 12016</strain>
    </source>
</reference>
<name>PUR5_CLOK1</name>
<protein>
    <recommendedName>
        <fullName evidence="1">Phosphoribosylformylglycinamidine cyclo-ligase</fullName>
        <ecNumber evidence="1">6.3.3.1</ecNumber>
    </recommendedName>
    <alternativeName>
        <fullName evidence="1">AIR synthase</fullName>
    </alternativeName>
    <alternativeName>
        <fullName evidence="1">AIRS</fullName>
    </alternativeName>
    <alternativeName>
        <fullName evidence="1">Phosphoribosyl-aminoimidazole synthetase</fullName>
    </alternativeName>
</protein>
<gene>
    <name evidence="1" type="primary">purM</name>
    <name type="ordered locus">CKR_2382</name>
</gene>
<organism>
    <name type="scientific">Clostridium kluyveri (strain NBRC 12016)</name>
    <dbReference type="NCBI Taxonomy" id="583346"/>
    <lineage>
        <taxon>Bacteria</taxon>
        <taxon>Bacillati</taxon>
        <taxon>Bacillota</taxon>
        <taxon>Clostridia</taxon>
        <taxon>Eubacteriales</taxon>
        <taxon>Clostridiaceae</taxon>
        <taxon>Clostridium</taxon>
    </lineage>
</organism>
<sequence>MVTYKDSGVNIEEGYKSVKLMKEYSAQTFIPGVLNGLGSFAGMFELGKYKNPVLVSGTDGVGTKLKIAFEMKIYDTVGIDCVAMCVNDILCHGAKPLFFLDYLACSNLEAEVAAELVKGISKGCMDAGCALIGGETAEMPGFYSKGEYDMAGFAVGVVEKDNIINGSTVEEGDVLVGIASSGVHSNGYSLVRKLVDNFQVDFFGSALGEVLLTPTRIYVKPVLKLLEKFKIKAMAHITGGGFYENIPRMFKEDFTAVIDKNSFEMPEIFKYIMDLGVDEEHMYNTYNMGIGFVLCVDSKDAPDIIKDLNEMGEKAYIIGHVKRREKRVCLK</sequence>
<accession>B9E4K8</accession>
<dbReference type="EC" id="6.3.3.1" evidence="1"/>
<dbReference type="EMBL" id="AP009049">
    <property type="protein sequence ID" value="BAH07433.1"/>
    <property type="molecule type" value="Genomic_DNA"/>
</dbReference>
<dbReference type="RefSeq" id="WP_012103028.1">
    <property type="nucleotide sequence ID" value="NC_011837.1"/>
</dbReference>
<dbReference type="SMR" id="B9E4K8"/>
<dbReference type="KEGG" id="ckr:CKR_2382"/>
<dbReference type="HOGENOM" id="CLU_047116_0_0_9"/>
<dbReference type="UniPathway" id="UPA00074">
    <property type="reaction ID" value="UER00129"/>
</dbReference>
<dbReference type="Proteomes" id="UP000007969">
    <property type="component" value="Chromosome"/>
</dbReference>
<dbReference type="GO" id="GO:0005829">
    <property type="term" value="C:cytosol"/>
    <property type="evidence" value="ECO:0007669"/>
    <property type="project" value="TreeGrafter"/>
</dbReference>
<dbReference type="GO" id="GO:0005524">
    <property type="term" value="F:ATP binding"/>
    <property type="evidence" value="ECO:0007669"/>
    <property type="project" value="UniProtKB-KW"/>
</dbReference>
<dbReference type="GO" id="GO:0004637">
    <property type="term" value="F:phosphoribosylamine-glycine ligase activity"/>
    <property type="evidence" value="ECO:0007669"/>
    <property type="project" value="TreeGrafter"/>
</dbReference>
<dbReference type="GO" id="GO:0004641">
    <property type="term" value="F:phosphoribosylformylglycinamidine cyclo-ligase activity"/>
    <property type="evidence" value="ECO:0007669"/>
    <property type="project" value="UniProtKB-UniRule"/>
</dbReference>
<dbReference type="GO" id="GO:0006189">
    <property type="term" value="P:'de novo' IMP biosynthetic process"/>
    <property type="evidence" value="ECO:0007669"/>
    <property type="project" value="UniProtKB-UniRule"/>
</dbReference>
<dbReference type="GO" id="GO:0046084">
    <property type="term" value="P:adenine biosynthetic process"/>
    <property type="evidence" value="ECO:0007669"/>
    <property type="project" value="TreeGrafter"/>
</dbReference>
<dbReference type="CDD" id="cd02196">
    <property type="entry name" value="PurM"/>
    <property type="match status" value="1"/>
</dbReference>
<dbReference type="FunFam" id="3.30.1330.10:FF:000001">
    <property type="entry name" value="Phosphoribosylformylglycinamidine cyclo-ligase"/>
    <property type="match status" value="1"/>
</dbReference>
<dbReference type="FunFam" id="3.90.650.10:FF:000011">
    <property type="entry name" value="Phosphoribosylformylglycinamidine cyclo-ligase"/>
    <property type="match status" value="1"/>
</dbReference>
<dbReference type="Gene3D" id="3.90.650.10">
    <property type="entry name" value="PurM-like C-terminal domain"/>
    <property type="match status" value="1"/>
</dbReference>
<dbReference type="Gene3D" id="3.30.1330.10">
    <property type="entry name" value="PurM-like, N-terminal domain"/>
    <property type="match status" value="1"/>
</dbReference>
<dbReference type="HAMAP" id="MF_00741">
    <property type="entry name" value="AIRS"/>
    <property type="match status" value="1"/>
</dbReference>
<dbReference type="InterPro" id="IPR010918">
    <property type="entry name" value="PurM-like_C_dom"/>
</dbReference>
<dbReference type="InterPro" id="IPR036676">
    <property type="entry name" value="PurM-like_C_sf"/>
</dbReference>
<dbReference type="InterPro" id="IPR016188">
    <property type="entry name" value="PurM-like_N"/>
</dbReference>
<dbReference type="InterPro" id="IPR036921">
    <property type="entry name" value="PurM-like_N_sf"/>
</dbReference>
<dbReference type="InterPro" id="IPR004733">
    <property type="entry name" value="PurM_cligase"/>
</dbReference>
<dbReference type="NCBIfam" id="TIGR00878">
    <property type="entry name" value="purM"/>
    <property type="match status" value="1"/>
</dbReference>
<dbReference type="PANTHER" id="PTHR10520:SF12">
    <property type="entry name" value="TRIFUNCTIONAL PURINE BIOSYNTHETIC PROTEIN ADENOSINE-3"/>
    <property type="match status" value="1"/>
</dbReference>
<dbReference type="PANTHER" id="PTHR10520">
    <property type="entry name" value="TRIFUNCTIONAL PURINE BIOSYNTHETIC PROTEIN ADENOSINE-3-RELATED"/>
    <property type="match status" value="1"/>
</dbReference>
<dbReference type="Pfam" id="PF00586">
    <property type="entry name" value="AIRS"/>
    <property type="match status" value="1"/>
</dbReference>
<dbReference type="Pfam" id="PF02769">
    <property type="entry name" value="AIRS_C"/>
    <property type="match status" value="1"/>
</dbReference>
<dbReference type="SUPFAM" id="SSF56042">
    <property type="entry name" value="PurM C-terminal domain-like"/>
    <property type="match status" value="1"/>
</dbReference>
<dbReference type="SUPFAM" id="SSF55326">
    <property type="entry name" value="PurM N-terminal domain-like"/>
    <property type="match status" value="1"/>
</dbReference>